<name>TRUB_GEOSL</name>
<comment type="function">
    <text evidence="1">Responsible for synthesis of pseudouridine from uracil-55 in the psi GC loop of transfer RNAs.</text>
</comment>
<comment type="catalytic activity">
    <reaction evidence="1">
        <text>uridine(55) in tRNA = pseudouridine(55) in tRNA</text>
        <dbReference type="Rhea" id="RHEA:42532"/>
        <dbReference type="Rhea" id="RHEA-COMP:10101"/>
        <dbReference type="Rhea" id="RHEA-COMP:10102"/>
        <dbReference type="ChEBI" id="CHEBI:65314"/>
        <dbReference type="ChEBI" id="CHEBI:65315"/>
        <dbReference type="EC" id="5.4.99.25"/>
    </reaction>
</comment>
<comment type="similarity">
    <text evidence="1">Belongs to the pseudouridine synthase TruB family. Type 1 subfamily.</text>
</comment>
<protein>
    <recommendedName>
        <fullName evidence="1">tRNA pseudouridine synthase B</fullName>
        <ecNumber evidence="1">5.4.99.25</ecNumber>
    </recommendedName>
    <alternativeName>
        <fullName evidence="1">tRNA pseudouridine(55) synthase</fullName>
        <shortName evidence="1">Psi55 synthase</shortName>
    </alternativeName>
    <alternativeName>
        <fullName evidence="1">tRNA pseudouridylate synthase</fullName>
    </alternativeName>
    <alternativeName>
        <fullName evidence="1">tRNA-uridine isomerase</fullName>
    </alternativeName>
</protein>
<proteinExistence type="inferred from homology"/>
<feature type="chain" id="PRO_0000121839" description="tRNA pseudouridine synthase B">
    <location>
        <begin position="1"/>
        <end position="304"/>
    </location>
</feature>
<feature type="active site" description="Nucleophile" evidence="1">
    <location>
        <position position="38"/>
    </location>
</feature>
<sequence length="304" mass="33017">MDGFIVIDKPIGLTSHDVVARVRQTLRQKKAGHTGTLDPFATGVLPVAVGEGTKAIPYLDESTKVYRATLILGAATDTQDHTGQVVHAGDWRHLEPQSVRDVVSSFTGKLSQLPPMFSALKRDGVPLYKLARTGREVERERREIEVFSLVVDSIDLPLVTFTLSCSRGTYVRTLAHDMGERLGCGAHLTELRRLSSGPFNLDRAISLERLKELAEAGNLADVLVSPSDALGHLHALPLTAQGAERVRRGMPPCREDVEHGAGTGIPAGTRLRLLRDGIVVAVADSLAGLWSSDTKNLRLLRVFN</sequence>
<gene>
    <name evidence="1" type="primary">truB</name>
    <name type="ordered locus">GSU1591</name>
</gene>
<evidence type="ECO:0000255" key="1">
    <source>
        <dbReference type="HAMAP-Rule" id="MF_01080"/>
    </source>
</evidence>
<organism>
    <name type="scientific">Geobacter sulfurreducens (strain ATCC 51573 / DSM 12127 / PCA)</name>
    <dbReference type="NCBI Taxonomy" id="243231"/>
    <lineage>
        <taxon>Bacteria</taxon>
        <taxon>Pseudomonadati</taxon>
        <taxon>Thermodesulfobacteriota</taxon>
        <taxon>Desulfuromonadia</taxon>
        <taxon>Geobacterales</taxon>
        <taxon>Geobacteraceae</taxon>
        <taxon>Geobacter</taxon>
    </lineage>
</organism>
<dbReference type="EC" id="5.4.99.25" evidence="1"/>
<dbReference type="EMBL" id="AE017180">
    <property type="protein sequence ID" value="AAR34965.1"/>
    <property type="molecule type" value="Genomic_DNA"/>
</dbReference>
<dbReference type="RefSeq" id="NP_952642.1">
    <property type="nucleotide sequence ID" value="NC_002939.5"/>
</dbReference>
<dbReference type="RefSeq" id="WP_010942236.1">
    <property type="nucleotide sequence ID" value="NC_002939.5"/>
</dbReference>
<dbReference type="SMR" id="P60344"/>
<dbReference type="FunCoup" id="P60344">
    <property type="interactions" value="507"/>
</dbReference>
<dbReference type="STRING" id="243231.GSU1591"/>
<dbReference type="EnsemblBacteria" id="AAR34965">
    <property type="protein sequence ID" value="AAR34965"/>
    <property type="gene ID" value="GSU1591"/>
</dbReference>
<dbReference type="KEGG" id="gsu:GSU1591"/>
<dbReference type="PATRIC" id="fig|243231.5.peg.1632"/>
<dbReference type="eggNOG" id="COG0130">
    <property type="taxonomic scope" value="Bacteria"/>
</dbReference>
<dbReference type="HOGENOM" id="CLU_032087_0_3_7"/>
<dbReference type="InParanoid" id="P60344"/>
<dbReference type="OrthoDB" id="9802309at2"/>
<dbReference type="Proteomes" id="UP000000577">
    <property type="component" value="Chromosome"/>
</dbReference>
<dbReference type="GO" id="GO:0009982">
    <property type="term" value="F:pseudouridine synthase activity"/>
    <property type="evidence" value="ECO:0000318"/>
    <property type="project" value="GO_Central"/>
</dbReference>
<dbReference type="GO" id="GO:0003723">
    <property type="term" value="F:RNA binding"/>
    <property type="evidence" value="ECO:0007669"/>
    <property type="project" value="InterPro"/>
</dbReference>
<dbReference type="GO" id="GO:0160148">
    <property type="term" value="F:tRNA pseudouridine(55) synthase activity"/>
    <property type="evidence" value="ECO:0007669"/>
    <property type="project" value="UniProtKB-EC"/>
</dbReference>
<dbReference type="GO" id="GO:1990481">
    <property type="term" value="P:mRNA pseudouridine synthesis"/>
    <property type="evidence" value="ECO:0000318"/>
    <property type="project" value="GO_Central"/>
</dbReference>
<dbReference type="GO" id="GO:0006400">
    <property type="term" value="P:tRNA modification"/>
    <property type="evidence" value="ECO:0000318"/>
    <property type="project" value="GO_Central"/>
</dbReference>
<dbReference type="GO" id="GO:0031119">
    <property type="term" value="P:tRNA pseudouridine synthesis"/>
    <property type="evidence" value="ECO:0007669"/>
    <property type="project" value="UniProtKB-UniRule"/>
</dbReference>
<dbReference type="CDD" id="cd02573">
    <property type="entry name" value="PseudoU_synth_EcTruB"/>
    <property type="match status" value="1"/>
</dbReference>
<dbReference type="FunFam" id="3.30.2350.10:FF:000056">
    <property type="entry name" value="tRNA pseudouridine synthase B"/>
    <property type="match status" value="1"/>
</dbReference>
<dbReference type="Gene3D" id="3.30.2350.10">
    <property type="entry name" value="Pseudouridine synthase"/>
    <property type="match status" value="1"/>
</dbReference>
<dbReference type="HAMAP" id="MF_01080">
    <property type="entry name" value="TruB_bact"/>
    <property type="match status" value="1"/>
</dbReference>
<dbReference type="InterPro" id="IPR020103">
    <property type="entry name" value="PsdUridine_synth_cat_dom_sf"/>
</dbReference>
<dbReference type="InterPro" id="IPR002501">
    <property type="entry name" value="PsdUridine_synth_N"/>
</dbReference>
<dbReference type="InterPro" id="IPR014780">
    <property type="entry name" value="tRNA_psdUridine_synth_TruB"/>
</dbReference>
<dbReference type="InterPro" id="IPR032819">
    <property type="entry name" value="TruB_C"/>
</dbReference>
<dbReference type="NCBIfam" id="TIGR00431">
    <property type="entry name" value="TruB"/>
    <property type="match status" value="1"/>
</dbReference>
<dbReference type="PANTHER" id="PTHR13767:SF2">
    <property type="entry name" value="PSEUDOURIDYLATE SYNTHASE TRUB1"/>
    <property type="match status" value="1"/>
</dbReference>
<dbReference type="PANTHER" id="PTHR13767">
    <property type="entry name" value="TRNA-PSEUDOURIDINE SYNTHASE"/>
    <property type="match status" value="1"/>
</dbReference>
<dbReference type="Pfam" id="PF16198">
    <property type="entry name" value="TruB_C_2"/>
    <property type="match status" value="1"/>
</dbReference>
<dbReference type="Pfam" id="PF01509">
    <property type="entry name" value="TruB_N"/>
    <property type="match status" value="1"/>
</dbReference>
<dbReference type="SUPFAM" id="SSF55120">
    <property type="entry name" value="Pseudouridine synthase"/>
    <property type="match status" value="1"/>
</dbReference>
<accession>P60344</accession>
<reference key="1">
    <citation type="journal article" date="2003" name="Science">
        <title>Genome of Geobacter sulfurreducens: metal reduction in subsurface environments.</title>
        <authorList>
            <person name="Methe B.A."/>
            <person name="Nelson K.E."/>
            <person name="Eisen J.A."/>
            <person name="Paulsen I.T."/>
            <person name="Nelson W.C."/>
            <person name="Heidelberg J.F."/>
            <person name="Wu D."/>
            <person name="Wu M."/>
            <person name="Ward N.L."/>
            <person name="Beanan M.J."/>
            <person name="Dodson R.J."/>
            <person name="Madupu R."/>
            <person name="Brinkac L.M."/>
            <person name="Daugherty S.C."/>
            <person name="DeBoy R.T."/>
            <person name="Durkin A.S."/>
            <person name="Gwinn M.L."/>
            <person name="Kolonay J.F."/>
            <person name="Sullivan S.A."/>
            <person name="Haft D.H."/>
            <person name="Selengut J."/>
            <person name="Davidsen T.M."/>
            <person name="Zafar N."/>
            <person name="White O."/>
            <person name="Tran B."/>
            <person name="Romero C."/>
            <person name="Forberger H.A."/>
            <person name="Weidman J.F."/>
            <person name="Khouri H.M."/>
            <person name="Feldblyum T.V."/>
            <person name="Utterback T.R."/>
            <person name="Van Aken S.E."/>
            <person name="Lovley D.R."/>
            <person name="Fraser C.M."/>
        </authorList>
    </citation>
    <scope>NUCLEOTIDE SEQUENCE [LARGE SCALE GENOMIC DNA]</scope>
    <source>
        <strain>ATCC 51573 / DSM 12127 / PCA</strain>
    </source>
</reference>
<keyword id="KW-0413">Isomerase</keyword>
<keyword id="KW-1185">Reference proteome</keyword>
<keyword id="KW-0819">tRNA processing</keyword>